<feature type="chain" id="PRO_0000311447" description="Iron-sulfur cluster insertion protein ErpA">
    <location>
        <begin position="1"/>
        <end position="119"/>
    </location>
</feature>
<feature type="binding site" evidence="1">
    <location>
        <position position="47"/>
    </location>
    <ligand>
        <name>iron-sulfur cluster</name>
        <dbReference type="ChEBI" id="CHEBI:30408"/>
    </ligand>
</feature>
<feature type="binding site" evidence="1">
    <location>
        <position position="111"/>
    </location>
    <ligand>
        <name>iron-sulfur cluster</name>
        <dbReference type="ChEBI" id="CHEBI:30408"/>
    </ligand>
</feature>
<feature type="binding site" evidence="1">
    <location>
        <position position="113"/>
    </location>
    <ligand>
        <name>iron-sulfur cluster</name>
        <dbReference type="ChEBI" id="CHEBI:30408"/>
    </ligand>
</feature>
<organism>
    <name type="scientific">Blochmanniella floridana</name>
    <dbReference type="NCBI Taxonomy" id="203907"/>
    <lineage>
        <taxon>Bacteria</taxon>
        <taxon>Pseudomonadati</taxon>
        <taxon>Pseudomonadota</taxon>
        <taxon>Gammaproteobacteria</taxon>
        <taxon>Enterobacterales</taxon>
        <taxon>Enterobacteriaceae</taxon>
        <taxon>ant endosymbionts</taxon>
        <taxon>Candidatus Blochmanniella</taxon>
    </lineage>
</organism>
<reference key="1">
    <citation type="journal article" date="2003" name="Proc. Natl. Acad. Sci. U.S.A.">
        <title>The genome sequence of Blochmannia floridanus: comparative analysis of reduced genomes.</title>
        <authorList>
            <person name="Gil R."/>
            <person name="Silva F.J."/>
            <person name="Zientz E."/>
            <person name="Delmotte F."/>
            <person name="Gonzalez-Candelas F."/>
            <person name="Latorre A."/>
            <person name="Rausell C."/>
            <person name="Kamerbeek J."/>
            <person name="Gadau J."/>
            <person name="Hoelldobler B."/>
            <person name="van Ham R.C.H.J."/>
            <person name="Gross R."/>
            <person name="Moya A."/>
        </authorList>
    </citation>
    <scope>NUCLEOTIDE SEQUENCE [LARGE SCALE GENOMIC DNA]</scope>
</reference>
<dbReference type="EMBL" id="BX248583">
    <property type="protein sequence ID" value="CAD83676.1"/>
    <property type="molecule type" value="Genomic_DNA"/>
</dbReference>
<dbReference type="SMR" id="Q7VQH5"/>
<dbReference type="STRING" id="203907.Bfl155"/>
<dbReference type="KEGG" id="bfl:Bfl155"/>
<dbReference type="eggNOG" id="COG0316">
    <property type="taxonomic scope" value="Bacteria"/>
</dbReference>
<dbReference type="HOGENOM" id="CLU_069054_5_3_6"/>
<dbReference type="OrthoDB" id="9801228at2"/>
<dbReference type="Proteomes" id="UP000002192">
    <property type="component" value="Chromosome"/>
</dbReference>
<dbReference type="GO" id="GO:0005829">
    <property type="term" value="C:cytosol"/>
    <property type="evidence" value="ECO:0007669"/>
    <property type="project" value="TreeGrafter"/>
</dbReference>
<dbReference type="GO" id="GO:0051537">
    <property type="term" value="F:2 iron, 2 sulfur cluster binding"/>
    <property type="evidence" value="ECO:0007669"/>
    <property type="project" value="UniProtKB-ARBA"/>
</dbReference>
<dbReference type="GO" id="GO:0051539">
    <property type="term" value="F:4 iron, 4 sulfur cluster binding"/>
    <property type="evidence" value="ECO:0007669"/>
    <property type="project" value="TreeGrafter"/>
</dbReference>
<dbReference type="GO" id="GO:0005506">
    <property type="term" value="F:iron ion binding"/>
    <property type="evidence" value="ECO:0007669"/>
    <property type="project" value="UniProtKB-UniRule"/>
</dbReference>
<dbReference type="GO" id="GO:0016226">
    <property type="term" value="P:iron-sulfur cluster assembly"/>
    <property type="evidence" value="ECO:0007669"/>
    <property type="project" value="UniProtKB-UniRule"/>
</dbReference>
<dbReference type="Gene3D" id="2.60.300.12">
    <property type="entry name" value="HesB-like domain"/>
    <property type="match status" value="1"/>
</dbReference>
<dbReference type="HAMAP" id="MF_01380">
    <property type="entry name" value="Fe_S_insert_ErpA"/>
    <property type="match status" value="1"/>
</dbReference>
<dbReference type="InterPro" id="IPR000361">
    <property type="entry name" value="FeS_biogenesis"/>
</dbReference>
<dbReference type="InterPro" id="IPR016092">
    <property type="entry name" value="FeS_cluster_insertion"/>
</dbReference>
<dbReference type="InterPro" id="IPR017870">
    <property type="entry name" value="FeS_cluster_insertion_CS"/>
</dbReference>
<dbReference type="InterPro" id="IPR023063">
    <property type="entry name" value="FeS_cluster_insertion_RrpA"/>
</dbReference>
<dbReference type="InterPro" id="IPR035903">
    <property type="entry name" value="HesB-like_dom_sf"/>
</dbReference>
<dbReference type="NCBIfam" id="TIGR00049">
    <property type="entry name" value="iron-sulfur cluster assembly accessory protein"/>
    <property type="match status" value="1"/>
</dbReference>
<dbReference type="NCBIfam" id="NF010147">
    <property type="entry name" value="PRK13623.1"/>
    <property type="match status" value="1"/>
</dbReference>
<dbReference type="PANTHER" id="PTHR43011">
    <property type="entry name" value="IRON-SULFUR CLUSTER ASSEMBLY 2 HOMOLOG, MITOCHONDRIAL"/>
    <property type="match status" value="1"/>
</dbReference>
<dbReference type="PANTHER" id="PTHR43011:SF1">
    <property type="entry name" value="IRON-SULFUR CLUSTER ASSEMBLY 2 HOMOLOG, MITOCHONDRIAL"/>
    <property type="match status" value="1"/>
</dbReference>
<dbReference type="Pfam" id="PF01521">
    <property type="entry name" value="Fe-S_biosyn"/>
    <property type="match status" value="1"/>
</dbReference>
<dbReference type="SUPFAM" id="SSF89360">
    <property type="entry name" value="HesB-like domain"/>
    <property type="match status" value="1"/>
</dbReference>
<dbReference type="PROSITE" id="PS01152">
    <property type="entry name" value="HESB"/>
    <property type="match status" value="1"/>
</dbReference>
<gene>
    <name evidence="1" type="primary">erpA</name>
    <name type="ordered locus">Bfl155</name>
</gene>
<protein>
    <recommendedName>
        <fullName evidence="1">Iron-sulfur cluster insertion protein ErpA</fullName>
    </recommendedName>
</protein>
<comment type="function">
    <text evidence="1">Required for insertion of 4Fe-4S clusters for at least IspG.</text>
</comment>
<comment type="cofactor">
    <cofactor evidence="1">
        <name>iron-sulfur cluster</name>
        <dbReference type="ChEBI" id="CHEBI:30408"/>
    </cofactor>
    <text evidence="1">Binds 1 iron-sulfur cluster per subunit.</text>
</comment>
<comment type="subunit">
    <text evidence="1">Homodimer.</text>
</comment>
<comment type="similarity">
    <text evidence="1">Belongs to the HesB/IscA family.</text>
</comment>
<keyword id="KW-0408">Iron</keyword>
<keyword id="KW-0411">Iron-sulfur</keyword>
<keyword id="KW-0479">Metal-binding</keyword>
<keyword id="KW-1185">Reference proteome</keyword>
<evidence type="ECO:0000255" key="1">
    <source>
        <dbReference type="HAMAP-Rule" id="MF_01380"/>
    </source>
</evidence>
<name>ERPA_BLOFL</name>
<sequence length="119" mass="12953">MSNDKKNAFPIKLTHSAADQVKKLISSQDYAEKLDLKLRVYILGGGCGGFQYKFILDDQVSNDDCVIESNGAIVVVDPMSLQYLFGGIIDYYEGLEGSKFLVVNPNAKGVCSCGSSFNI</sequence>
<accession>Q7VQH5</accession>
<proteinExistence type="inferred from homology"/>